<feature type="chain" id="PRO_0000418804" description="Sucrose synthase 5">
    <location>
        <begin position="1"/>
        <end position="836"/>
    </location>
</feature>
<feature type="region of interest" description="GT-B glycosyltransferase" evidence="1">
    <location>
        <begin position="270"/>
        <end position="748"/>
    </location>
</feature>
<feature type="region of interest" description="Disordered" evidence="2">
    <location>
        <begin position="805"/>
        <end position="836"/>
    </location>
</feature>
<evidence type="ECO:0000250" key="1"/>
<evidence type="ECO:0000256" key="2">
    <source>
        <dbReference type="SAM" id="MobiDB-lite"/>
    </source>
</evidence>
<evidence type="ECO:0000269" key="3">
    <source>
    </source>
</evidence>
<evidence type="ECO:0000269" key="4">
    <source>
    </source>
</evidence>
<evidence type="ECO:0000269" key="5">
    <source>
    </source>
</evidence>
<evidence type="ECO:0000269" key="6">
    <source>
    </source>
</evidence>
<evidence type="ECO:0000305" key="7"/>
<protein>
    <recommendedName>
        <fullName>Sucrose synthase 5</fullName>
        <shortName>AtSUS5</shortName>
        <ecNumber>2.4.1.13</ecNumber>
    </recommendedName>
    <alternativeName>
        <fullName>Sucrose-UDP glucosyltransferase 5</fullName>
    </alternativeName>
</protein>
<accession>F4K5W8</accession>
<accession>Q9FHU4</accession>
<sequence>MEMTSGSLGNGIPEAMGQNRGNIKRCLEKYIENGRRVMKLNELMDEMEIVINDVTQRRRVMEGDLGKILCFTQAVVIPPNVAFAVRGTPGNWQYVKVNSSNLSVEALSSTQYLKLKEFLFDENWANDENALEVDFGALDFTLPWLSLSSSIGNGLSFVSSKLGGRLNDNPQSLVDYLLSLEHQGEKLMMNETLNTARKLEMSLILADVFLSELPKDTPFQAFELRFKECGFEKGWGESAGRVKETMRILSEILQAPDPQNIDRFFARVPRIFNVVIFSVHGYFGQTDVLGLPDTGGQVVYILDQVKALEDELLQRINSQGLNFKPQILVVTRLIPDAKKTKCNQELEPIFGTKYSNILRIPFVTENGILRRWVSRFDIYPYLERFTKDATTKILDILEGKPDLIIGNYTDGNLVASLMANKLGITQATIAHALEKTKYEDSDIKWKEFDPKYHFSSQFTADLISMNSADFIIASTYQEIAGSKERAGQYESHMSFTVPGLYRVVSGINVFDPRFNIAAPGADDSIYFPFTAQDRRFTKFYTSIDELLYSQSENDEHIGYLVDKKKPIIFSMARLDVVKNLTGLTEWYAKNKRLRDLVNLVIVGGFFDASKSKDREEISEIKKMHSLIEKYQLKGQFRWITAQTDRTRNGELYRSIADTRGAFVQPAHYEAFGLTVIEAMSCGLVTFATNQGGPAEIIVDGVSGFHIDPSNGEESSDKIADFFEKSGMDPDYWNMFSNEGLQRINECYTWKIYANKVINMGSTYSYWRHLNKDQKLAKQRYIHSFYNLQYRNLVKTIPILSDIPEPPPLPPKPLVKPSASKGSKRTQPRLSFRLFGA</sequence>
<reference key="1">
    <citation type="journal article" date="1999" name="DNA Res.">
        <title>Structural analysis of Arabidopsis thaliana chromosome 5. IX. Sequence features of the regions of 1,011,550 bp covered by seventeen P1 and TAC clones.</title>
        <authorList>
            <person name="Kaneko T."/>
            <person name="Katoh T."/>
            <person name="Sato S."/>
            <person name="Nakamura Y."/>
            <person name="Asamizu E."/>
            <person name="Kotani H."/>
            <person name="Miyajima N."/>
            <person name="Tabata S."/>
        </authorList>
    </citation>
    <scope>NUCLEOTIDE SEQUENCE [LARGE SCALE GENOMIC DNA]</scope>
    <source>
        <strain>cv. Columbia</strain>
    </source>
</reference>
<reference key="2">
    <citation type="journal article" date="2017" name="Plant J.">
        <title>Araport11: a complete reannotation of the Arabidopsis thaliana reference genome.</title>
        <authorList>
            <person name="Cheng C.Y."/>
            <person name="Krishnakumar V."/>
            <person name="Chan A.P."/>
            <person name="Thibaud-Nissen F."/>
            <person name="Schobel S."/>
            <person name="Town C.D."/>
        </authorList>
    </citation>
    <scope>GENOME REANNOTATION</scope>
    <source>
        <strain>cv. Columbia</strain>
    </source>
</reference>
<reference key="3">
    <citation type="journal article" date="2004" name="J. Exp. Bot.">
        <title>Structure and expression profile of the sucrose synthase multigene family in Arabidopsis.</title>
        <authorList>
            <person name="Baud S."/>
            <person name="Vaultier M.N."/>
            <person name="Rochat C."/>
        </authorList>
    </citation>
    <scope>GENE FAMILY</scope>
    <scope>TISSUE SPECIFICITY</scope>
</reference>
<reference key="4">
    <citation type="journal article" date="2007" name="Plant J.">
        <title>Analysis of the sucrose synthase gene family in Arabidopsis.</title>
        <authorList>
            <person name="Bieniawska Z."/>
            <person name="Paul Barratt D.H."/>
            <person name="Garlick A.P."/>
            <person name="Thole V."/>
            <person name="Kruger N.J."/>
            <person name="Martin C."/>
            <person name="Zrenner R."/>
            <person name="Smith A.M."/>
        </authorList>
    </citation>
    <scope>TISSUE SPECIFICITY</scope>
    <scope>DISRUPTION PHENOTYPE</scope>
</reference>
<reference key="5">
    <citation type="journal article" date="2008" name="J. Exp. Bot.">
        <title>Localization of sucrose synthase in developing seed and siliques of Arabidopsis thaliana reveals diverse roles for SUS during development.</title>
        <authorList>
            <person name="Fallahi H."/>
            <person name="Scofield G.N."/>
            <person name="Badger M.R."/>
            <person name="Chow W.S."/>
            <person name="Furbank R.T."/>
            <person name="Ruan Y.L."/>
        </authorList>
    </citation>
    <scope>TISSUE SPECIFICITY</scope>
</reference>
<reference key="6">
    <citation type="journal article" date="2009" name="Proc. Natl. Acad. Sci. U.S.A.">
        <title>Normal growth of Arabidopsis requires cytosolic invertase but not sucrose synthase.</title>
        <authorList>
            <person name="Barratt D.H."/>
            <person name="Derbyshire P."/>
            <person name="Findlay K."/>
            <person name="Pike M."/>
            <person name="Wellner N."/>
            <person name="Lunn J."/>
            <person name="Feil R."/>
            <person name="Simpson C."/>
            <person name="Maule A.J."/>
            <person name="Smith A.M."/>
        </authorList>
    </citation>
    <scope>SUBCELLULAR LOCATION</scope>
    <scope>TISSUE SPECIFICITY</scope>
    <scope>FUNCTION</scope>
</reference>
<gene>
    <name type="primary">SUS5</name>
    <name type="ordered locus">At5g37180</name>
    <name type="ORF">MJG14.25</name>
</gene>
<organism>
    <name type="scientific">Arabidopsis thaliana</name>
    <name type="common">Mouse-ear cress</name>
    <dbReference type="NCBI Taxonomy" id="3702"/>
    <lineage>
        <taxon>Eukaryota</taxon>
        <taxon>Viridiplantae</taxon>
        <taxon>Streptophyta</taxon>
        <taxon>Embryophyta</taxon>
        <taxon>Tracheophyta</taxon>
        <taxon>Spermatophyta</taxon>
        <taxon>Magnoliopsida</taxon>
        <taxon>eudicotyledons</taxon>
        <taxon>Gunneridae</taxon>
        <taxon>Pentapetalae</taxon>
        <taxon>rosids</taxon>
        <taxon>malvids</taxon>
        <taxon>Brassicales</taxon>
        <taxon>Brassicaceae</taxon>
        <taxon>Camelineae</taxon>
        <taxon>Arabidopsis</taxon>
    </lineage>
</organism>
<comment type="function">
    <text evidence="6">Sucrose-cleaving enzyme that provides UDP-glucose and fructose for various metabolic pathways. Functions in callose synthesis at the site of phloem sieve elements.</text>
</comment>
<comment type="catalytic activity">
    <reaction>
        <text>an NDP-alpha-D-glucose + D-fructose = a ribonucleoside 5'-diphosphate + sucrose + H(+)</text>
        <dbReference type="Rhea" id="RHEA:16241"/>
        <dbReference type="ChEBI" id="CHEBI:15378"/>
        <dbReference type="ChEBI" id="CHEBI:17992"/>
        <dbReference type="ChEBI" id="CHEBI:37721"/>
        <dbReference type="ChEBI" id="CHEBI:57930"/>
        <dbReference type="ChEBI" id="CHEBI:76533"/>
        <dbReference type="EC" id="2.4.1.13"/>
    </reaction>
</comment>
<comment type="subcellular location">
    <subcellularLocation>
        <location evidence="6">Secreted</location>
        <location evidence="6">Cell wall</location>
    </subcellularLocation>
</comment>
<comment type="tissue specificity">
    <text evidence="3 4 5 6">Detected in the whole plant but more precisely confined to the vasculature in cotyledons, leaves, petals, anthers and roots. Also detected in developing siliques, young immature rosette and cauline leaves.</text>
</comment>
<comment type="disruption phenotype">
    <text evidence="4">No visible phenotype.</text>
</comment>
<comment type="similarity">
    <text evidence="7">Belongs to the glycosyltransferase 1 family. Plant sucrose synthase subfamily.</text>
</comment>
<comment type="sequence caution" evidence="7">
    <conflict type="erroneous gene model prediction">
        <sequence resource="EMBL-CDS" id="BAB11375"/>
    </conflict>
</comment>
<dbReference type="EC" id="2.4.1.13"/>
<dbReference type="EMBL" id="AB017068">
    <property type="protein sequence ID" value="BAB11375.1"/>
    <property type="status" value="ALT_SEQ"/>
    <property type="molecule type" value="Genomic_DNA"/>
</dbReference>
<dbReference type="EMBL" id="CP002688">
    <property type="status" value="NOT_ANNOTATED_CDS"/>
    <property type="molecule type" value="Genomic_DNA"/>
</dbReference>
<dbReference type="SMR" id="F4K5W8"/>
<dbReference type="STRING" id="3702.F4K5W8"/>
<dbReference type="CAZy" id="GT4">
    <property type="family name" value="Glycosyltransferase Family 4"/>
</dbReference>
<dbReference type="PaxDb" id="3702-AT5G37180.1"/>
<dbReference type="ProteomicsDB" id="228312"/>
<dbReference type="Araport" id="AT5G37180"/>
<dbReference type="TAIR" id="AT5G37180">
    <property type="gene designation" value="SUS5"/>
</dbReference>
<dbReference type="eggNOG" id="KOG0853">
    <property type="taxonomic scope" value="Eukaryota"/>
</dbReference>
<dbReference type="HOGENOM" id="CLU_019158_1_0_1"/>
<dbReference type="InParanoid" id="F4K5W8"/>
<dbReference type="BioCyc" id="MetaCyc:AT5G37180-MONOMER"/>
<dbReference type="BRENDA" id="2.4.1.13">
    <property type="organism ID" value="399"/>
</dbReference>
<dbReference type="PRO" id="PR:F4K5W8"/>
<dbReference type="Proteomes" id="UP000006548">
    <property type="component" value="Chromosome 5"/>
</dbReference>
<dbReference type="ExpressionAtlas" id="F4K5W8">
    <property type="expression patterns" value="baseline and differential"/>
</dbReference>
<dbReference type="GO" id="GO:0005576">
    <property type="term" value="C:extracellular region"/>
    <property type="evidence" value="ECO:0007669"/>
    <property type="project" value="UniProtKB-KW"/>
</dbReference>
<dbReference type="GO" id="GO:0016157">
    <property type="term" value="F:sucrose synthase activity"/>
    <property type="evidence" value="ECO:0000314"/>
    <property type="project" value="TAIR"/>
</dbReference>
<dbReference type="GO" id="GO:0080165">
    <property type="term" value="P:callose deposition in phloem sieve plate"/>
    <property type="evidence" value="ECO:0000315"/>
    <property type="project" value="TAIR"/>
</dbReference>
<dbReference type="GO" id="GO:0005985">
    <property type="term" value="P:sucrose metabolic process"/>
    <property type="evidence" value="ECO:0007669"/>
    <property type="project" value="InterPro"/>
</dbReference>
<dbReference type="FunFam" id="3.10.450.330:FF:000001">
    <property type="entry name" value="Sucrose synthase"/>
    <property type="match status" value="1"/>
</dbReference>
<dbReference type="FunFam" id="3.40.50.2000:FF:000006">
    <property type="entry name" value="Sucrose synthase"/>
    <property type="match status" value="1"/>
</dbReference>
<dbReference type="Gene3D" id="1.20.120.1230">
    <property type="match status" value="1"/>
</dbReference>
<dbReference type="Gene3D" id="3.10.450.330">
    <property type="match status" value="1"/>
</dbReference>
<dbReference type="Gene3D" id="3.40.50.2000">
    <property type="entry name" value="Glycogen Phosphorylase B"/>
    <property type="match status" value="2"/>
</dbReference>
<dbReference type="InterPro" id="IPR001296">
    <property type="entry name" value="Glyco_trans_1"/>
</dbReference>
<dbReference type="InterPro" id="IPR000368">
    <property type="entry name" value="Sucrose_synth_GT-B1"/>
</dbReference>
<dbReference type="InterPro" id="IPR012820">
    <property type="entry name" value="Sucrose_synthase_pln/cyn"/>
</dbReference>
<dbReference type="InterPro" id="IPR056736">
    <property type="entry name" value="SUS_EPBD"/>
</dbReference>
<dbReference type="InterPro" id="IPR056735">
    <property type="entry name" value="SUS_N"/>
</dbReference>
<dbReference type="NCBIfam" id="TIGR02470">
    <property type="entry name" value="sucr_synth"/>
    <property type="match status" value="1"/>
</dbReference>
<dbReference type="PANTHER" id="PTHR45839">
    <property type="match status" value="1"/>
</dbReference>
<dbReference type="PANTHER" id="PTHR45839:SF4">
    <property type="entry name" value="SUCROSE SYNTHASE 5"/>
    <property type="match status" value="1"/>
</dbReference>
<dbReference type="Pfam" id="PF00534">
    <property type="entry name" value="Glycos_transf_1"/>
    <property type="match status" value="1"/>
</dbReference>
<dbReference type="Pfam" id="PF00862">
    <property type="entry name" value="GT-B_Sucrose_synth"/>
    <property type="match status" value="1"/>
</dbReference>
<dbReference type="Pfam" id="PF24862">
    <property type="entry name" value="SUS_EPBD"/>
    <property type="match status" value="1"/>
</dbReference>
<dbReference type="Pfam" id="PF24861">
    <property type="entry name" value="SUS_N"/>
    <property type="match status" value="1"/>
</dbReference>
<dbReference type="SUPFAM" id="SSF53756">
    <property type="entry name" value="UDP-Glycosyltransferase/glycogen phosphorylase"/>
    <property type="match status" value="1"/>
</dbReference>
<proteinExistence type="evidence at transcript level"/>
<keyword id="KW-0134">Cell wall</keyword>
<keyword id="KW-0328">Glycosyltransferase</keyword>
<keyword id="KW-1185">Reference proteome</keyword>
<keyword id="KW-0964">Secreted</keyword>
<keyword id="KW-0808">Transferase</keyword>
<name>SUS5_ARATH</name>